<proteinExistence type="inferred from homology"/>
<reference key="1">
    <citation type="journal article" date="2002" name="DNA Res.">
        <title>Complete genome structure of the thermophilic cyanobacterium Thermosynechococcus elongatus BP-1.</title>
        <authorList>
            <person name="Nakamura Y."/>
            <person name="Kaneko T."/>
            <person name="Sato S."/>
            <person name="Ikeuchi M."/>
            <person name="Katoh H."/>
            <person name="Sasamoto S."/>
            <person name="Watanabe A."/>
            <person name="Iriguchi M."/>
            <person name="Kawashima K."/>
            <person name="Kimura T."/>
            <person name="Kishida Y."/>
            <person name="Kiyokawa C."/>
            <person name="Kohara M."/>
            <person name="Matsumoto M."/>
            <person name="Matsuno A."/>
            <person name="Nakazaki N."/>
            <person name="Shimpo S."/>
            <person name="Sugimoto M."/>
            <person name="Takeuchi C."/>
            <person name="Yamada M."/>
            <person name="Tabata S."/>
        </authorList>
    </citation>
    <scope>NUCLEOTIDE SEQUENCE [LARGE SCALE GENOMIC DNA]</scope>
    <source>
        <strain>NIES-2133 / IAM M-273 / BP-1</strain>
    </source>
</reference>
<accession>Q8DIQ6</accession>
<organism>
    <name type="scientific">Thermosynechococcus vestitus (strain NIES-2133 / IAM M-273 / BP-1)</name>
    <dbReference type="NCBI Taxonomy" id="197221"/>
    <lineage>
        <taxon>Bacteria</taxon>
        <taxon>Bacillati</taxon>
        <taxon>Cyanobacteriota</taxon>
        <taxon>Cyanophyceae</taxon>
        <taxon>Acaryochloridales</taxon>
        <taxon>Thermosynechococcaceae</taxon>
        <taxon>Thermosynechococcus</taxon>
    </lineage>
</organism>
<keyword id="KW-0472">Membrane</keyword>
<keyword id="KW-0602">Photosynthesis</keyword>
<keyword id="KW-1185">Reference proteome</keyword>
<keyword id="KW-0677">Repeat</keyword>
<keyword id="KW-0793">Thylakoid</keyword>
<keyword id="KW-0802">TPR repeat</keyword>
<name>YCF3_THEVB</name>
<feature type="chain" id="PRO_0000217832" description="Photosystem I assembly protein Ycf3">
    <location>
        <begin position="1"/>
        <end position="173"/>
    </location>
</feature>
<feature type="repeat" description="TPR 1">
    <location>
        <begin position="35"/>
        <end position="68"/>
    </location>
</feature>
<feature type="repeat" description="TPR 2">
    <location>
        <begin position="72"/>
        <end position="105"/>
    </location>
</feature>
<feature type="repeat" description="TPR 3">
    <location>
        <begin position="113"/>
        <end position="146"/>
    </location>
</feature>
<gene>
    <name evidence="1" type="primary">ycf3</name>
    <name type="ordered locus">tll1525</name>
</gene>
<comment type="function">
    <text evidence="1">Essential for the assembly of the photosystem I (PSI) complex. May act as a chaperone-like factor to guide the assembly of the PSI subunits.</text>
</comment>
<comment type="subcellular location">
    <subcellularLocation>
        <location evidence="1">Cellular thylakoid membrane</location>
        <topology evidence="1">Peripheral membrane protein</topology>
    </subcellularLocation>
</comment>
<comment type="similarity">
    <text evidence="1">Belongs to the Ycf3 family.</text>
</comment>
<sequence length="173" mass="20028">MPRSQRNDNFIDKTFTVMADLILKVLPTSSQSKTAFAYYRDGMSAQADGEYAEALENYQAALELEEDPTDRSYILYNIGLIHASNGEHEKALEYYHQALELNPRMPQALNNIAVIYHYLGTQAEEQQRLEEAEQFFDRAADYWKRAIQLAPNNYIEAQNWLKTTGRSNIDVYF</sequence>
<protein>
    <recommendedName>
        <fullName evidence="1">Photosystem I assembly protein Ycf3</fullName>
    </recommendedName>
</protein>
<dbReference type="EMBL" id="BA000039">
    <property type="protein sequence ID" value="BAC09077.1"/>
    <property type="molecule type" value="Genomic_DNA"/>
</dbReference>
<dbReference type="RefSeq" id="NP_682315.1">
    <property type="nucleotide sequence ID" value="NC_004113.1"/>
</dbReference>
<dbReference type="RefSeq" id="WP_011057365.1">
    <property type="nucleotide sequence ID" value="NC_004113.1"/>
</dbReference>
<dbReference type="SMR" id="Q8DIQ6"/>
<dbReference type="STRING" id="197221.gene:10748125"/>
<dbReference type="EnsemblBacteria" id="BAC09077">
    <property type="protein sequence ID" value="BAC09077"/>
    <property type="gene ID" value="BAC09077"/>
</dbReference>
<dbReference type="KEGG" id="tel:tll1525"/>
<dbReference type="PATRIC" id="fig|197221.4.peg.1602"/>
<dbReference type="eggNOG" id="COG0457">
    <property type="taxonomic scope" value="Bacteria"/>
</dbReference>
<dbReference type="Proteomes" id="UP000000440">
    <property type="component" value="Chromosome"/>
</dbReference>
<dbReference type="GO" id="GO:0031676">
    <property type="term" value="C:plasma membrane-derived thylakoid membrane"/>
    <property type="evidence" value="ECO:0007669"/>
    <property type="project" value="UniProtKB-SubCell"/>
</dbReference>
<dbReference type="GO" id="GO:0015979">
    <property type="term" value="P:photosynthesis"/>
    <property type="evidence" value="ECO:0007669"/>
    <property type="project" value="UniProtKB-UniRule"/>
</dbReference>
<dbReference type="Gene3D" id="1.25.40.10">
    <property type="entry name" value="Tetratricopeptide repeat domain"/>
    <property type="match status" value="1"/>
</dbReference>
<dbReference type="HAMAP" id="MF_00439">
    <property type="entry name" value="Ycf3"/>
    <property type="match status" value="1"/>
</dbReference>
<dbReference type="InterPro" id="IPR022818">
    <property type="entry name" value="PSI_Ycf3_assembly"/>
</dbReference>
<dbReference type="InterPro" id="IPR011990">
    <property type="entry name" value="TPR-like_helical_dom_sf"/>
</dbReference>
<dbReference type="InterPro" id="IPR019734">
    <property type="entry name" value="TPR_rpt"/>
</dbReference>
<dbReference type="InterPro" id="IPR051685">
    <property type="entry name" value="Ycf3/AcsC/BcsC/TPR_MFPF"/>
</dbReference>
<dbReference type="NCBIfam" id="NF002725">
    <property type="entry name" value="PRK02603.1"/>
    <property type="match status" value="1"/>
</dbReference>
<dbReference type="PANTHER" id="PTHR44943">
    <property type="entry name" value="CELLULOSE SYNTHASE OPERON PROTEIN C"/>
    <property type="match status" value="1"/>
</dbReference>
<dbReference type="PANTHER" id="PTHR44943:SF8">
    <property type="entry name" value="TPR REPEAT-CONTAINING PROTEIN MJ0263"/>
    <property type="match status" value="1"/>
</dbReference>
<dbReference type="Pfam" id="PF00515">
    <property type="entry name" value="TPR_1"/>
    <property type="match status" value="1"/>
</dbReference>
<dbReference type="Pfam" id="PF13176">
    <property type="entry name" value="TPR_7"/>
    <property type="match status" value="1"/>
</dbReference>
<dbReference type="SMART" id="SM00028">
    <property type="entry name" value="TPR"/>
    <property type="match status" value="3"/>
</dbReference>
<dbReference type="SUPFAM" id="SSF48452">
    <property type="entry name" value="TPR-like"/>
    <property type="match status" value="1"/>
</dbReference>
<dbReference type="PROSITE" id="PS50005">
    <property type="entry name" value="TPR"/>
    <property type="match status" value="3"/>
</dbReference>
<dbReference type="PROSITE" id="PS50293">
    <property type="entry name" value="TPR_REGION"/>
    <property type="match status" value="1"/>
</dbReference>
<evidence type="ECO:0000255" key="1">
    <source>
        <dbReference type="HAMAP-Rule" id="MF_00439"/>
    </source>
</evidence>